<protein>
    <recommendedName>
        <fullName evidence="1">Methylthioribose-1-phosphate isomerase</fullName>
        <shortName evidence="1">M1Pi</shortName>
        <shortName evidence="1">MTR-1-P isomerase</shortName>
        <ecNumber evidence="1">5.3.1.23</ecNumber>
    </recommendedName>
    <alternativeName>
        <fullName evidence="1">S-methyl-5-thioribose-1-phosphate isomerase</fullName>
    </alternativeName>
</protein>
<comment type="function">
    <text evidence="1">Catalyzes the interconversion of methylthioribose-1-phosphate (MTR-1-P) into methylthioribulose-1-phosphate (MTRu-1-P).</text>
</comment>
<comment type="catalytic activity">
    <reaction evidence="1">
        <text>5-(methylsulfanyl)-alpha-D-ribose 1-phosphate = 5-(methylsulfanyl)-D-ribulose 1-phosphate</text>
        <dbReference type="Rhea" id="RHEA:19989"/>
        <dbReference type="ChEBI" id="CHEBI:58533"/>
        <dbReference type="ChEBI" id="CHEBI:58548"/>
        <dbReference type="EC" id="5.3.1.23"/>
    </reaction>
</comment>
<comment type="pathway">
    <text evidence="1">Amino-acid biosynthesis; L-methionine biosynthesis via salvage pathway; L-methionine from S-methyl-5-thio-alpha-D-ribose 1-phosphate: step 1/6.</text>
</comment>
<comment type="similarity">
    <text evidence="2">Belongs to the eIF-2B alpha/beta/delta subunits family. MtnA subfamily.</text>
</comment>
<dbReference type="EC" id="5.3.1.23" evidence="1"/>
<dbReference type="EMBL" id="BA000045">
    <property type="protein sequence ID" value="BAC88136.1"/>
    <property type="molecule type" value="Genomic_DNA"/>
</dbReference>
<dbReference type="RefSeq" id="NP_923141.1">
    <property type="nucleotide sequence ID" value="NC_005125.1"/>
</dbReference>
<dbReference type="RefSeq" id="WP_011140199.1">
    <property type="nucleotide sequence ID" value="NC_005125.1"/>
</dbReference>
<dbReference type="SMR" id="Q7NP62"/>
<dbReference type="STRING" id="251221.gene:10757666"/>
<dbReference type="EnsemblBacteria" id="BAC88136">
    <property type="protein sequence ID" value="BAC88136"/>
    <property type="gene ID" value="BAC88136"/>
</dbReference>
<dbReference type="KEGG" id="gvi:gll0195"/>
<dbReference type="PATRIC" id="fig|251221.4.peg.196"/>
<dbReference type="eggNOG" id="COG0182">
    <property type="taxonomic scope" value="Bacteria"/>
</dbReference>
<dbReference type="HOGENOM" id="CLU_016218_1_2_3"/>
<dbReference type="InParanoid" id="Q7NP62"/>
<dbReference type="OrthoDB" id="9803436at2"/>
<dbReference type="PhylomeDB" id="Q7NP62"/>
<dbReference type="UniPathway" id="UPA00904">
    <property type="reaction ID" value="UER00874"/>
</dbReference>
<dbReference type="Proteomes" id="UP000000557">
    <property type="component" value="Chromosome"/>
</dbReference>
<dbReference type="GO" id="GO:0046523">
    <property type="term" value="F:S-methyl-5-thioribose-1-phosphate isomerase activity"/>
    <property type="evidence" value="ECO:0000318"/>
    <property type="project" value="GO_Central"/>
</dbReference>
<dbReference type="GO" id="GO:0019509">
    <property type="term" value="P:L-methionine salvage from methylthioadenosine"/>
    <property type="evidence" value="ECO:0000318"/>
    <property type="project" value="GO_Central"/>
</dbReference>
<dbReference type="FunFam" id="3.40.50.10470:FF:000006">
    <property type="entry name" value="Methylthioribose-1-phosphate isomerase"/>
    <property type="match status" value="1"/>
</dbReference>
<dbReference type="FunFam" id="1.20.120.420:FF:000012">
    <property type="entry name" value="Putative methylthioribose-1-phosphate isomerase"/>
    <property type="match status" value="1"/>
</dbReference>
<dbReference type="Gene3D" id="1.20.120.420">
    <property type="entry name" value="translation initiation factor eif-2b, domain 1"/>
    <property type="match status" value="1"/>
</dbReference>
<dbReference type="Gene3D" id="3.40.50.10470">
    <property type="entry name" value="Translation initiation factor eif-2b, domain 2"/>
    <property type="match status" value="1"/>
</dbReference>
<dbReference type="HAMAP" id="MF_01678">
    <property type="entry name" value="Salvage_MtnA"/>
    <property type="match status" value="1"/>
</dbReference>
<dbReference type="InterPro" id="IPR000649">
    <property type="entry name" value="IF-2B-related"/>
</dbReference>
<dbReference type="InterPro" id="IPR005251">
    <property type="entry name" value="IF-M1Pi"/>
</dbReference>
<dbReference type="InterPro" id="IPR042529">
    <property type="entry name" value="IF_2B-like_C"/>
</dbReference>
<dbReference type="InterPro" id="IPR011559">
    <property type="entry name" value="Initiation_fac_2B_a/b/d"/>
</dbReference>
<dbReference type="InterPro" id="IPR027363">
    <property type="entry name" value="M1Pi_N"/>
</dbReference>
<dbReference type="InterPro" id="IPR037171">
    <property type="entry name" value="NagB/RpiA_transferase-like"/>
</dbReference>
<dbReference type="NCBIfam" id="TIGR00524">
    <property type="entry name" value="eIF-2B_rel"/>
    <property type="match status" value="1"/>
</dbReference>
<dbReference type="NCBIfam" id="NF004326">
    <property type="entry name" value="PRK05720.1"/>
    <property type="match status" value="1"/>
</dbReference>
<dbReference type="NCBIfam" id="TIGR00512">
    <property type="entry name" value="salvage_mtnA"/>
    <property type="match status" value="1"/>
</dbReference>
<dbReference type="PANTHER" id="PTHR43475">
    <property type="entry name" value="METHYLTHIORIBOSE-1-PHOSPHATE ISOMERASE"/>
    <property type="match status" value="1"/>
</dbReference>
<dbReference type="PANTHER" id="PTHR43475:SF1">
    <property type="entry name" value="METHYLTHIORIBOSE-1-PHOSPHATE ISOMERASE"/>
    <property type="match status" value="1"/>
</dbReference>
<dbReference type="Pfam" id="PF01008">
    <property type="entry name" value="IF-2B"/>
    <property type="match status" value="1"/>
</dbReference>
<dbReference type="SUPFAM" id="SSF100950">
    <property type="entry name" value="NagB/RpiA/CoA transferase-like"/>
    <property type="match status" value="1"/>
</dbReference>
<feature type="chain" id="PRO_0000357191" description="Methylthioribose-1-phosphate isomerase">
    <location>
        <begin position="1"/>
        <end position="348"/>
    </location>
</feature>
<feature type="active site" description="Proton donor" evidence="1">
    <location>
        <position position="238"/>
    </location>
</feature>
<feature type="binding site" evidence="1">
    <location>
        <begin position="53"/>
        <end position="55"/>
    </location>
    <ligand>
        <name>substrate</name>
    </ligand>
</feature>
<feature type="binding site" evidence="1">
    <location>
        <position position="93"/>
    </location>
    <ligand>
        <name>substrate</name>
    </ligand>
</feature>
<feature type="binding site" evidence="1">
    <location>
        <position position="197"/>
    </location>
    <ligand>
        <name>substrate</name>
    </ligand>
</feature>
<feature type="binding site" evidence="1">
    <location>
        <begin position="248"/>
        <end position="249"/>
    </location>
    <ligand>
        <name>substrate</name>
    </ligand>
</feature>
<feature type="site" description="Transition state stabilizer" evidence="1">
    <location>
        <position position="158"/>
    </location>
</feature>
<gene>
    <name evidence="1" type="primary">mtnA</name>
    <name type="ordered locus">gll0195</name>
</gene>
<accession>Q7NP62</accession>
<sequence length="348" mass="37236">MTFSAVQSEIRPVQWNGHTCVLIDQTVLPGIYRTIEIRTSDQMATAIRTMIVRGAPAIGVAAAFGMVLGWQEAPQGDPITHLERVAATLRATRPTAVNLFWAIDRMLTVARRDPSFARLEREATAILEGDIATCRAIGEHGLLALPAAPERLRLLTHCNAGALATAGYGTALGVVRSAHRADRLERVYADETRPRLQGARLTAWELVHERIPVTVLADTMAAHVIGRGLVDAVVVGADRIAANGDTANKIGTCGVAIIARHYGVPFFVAAPWSTVDLNLSSGEQIPIEQRDSEEMRAIEGVALCPQGVEFYNPAFDVTPASLVTGIIVESGVYAPGELAAAGQVRLGR</sequence>
<organism>
    <name type="scientific">Gloeobacter violaceus (strain ATCC 29082 / PCC 7421)</name>
    <dbReference type="NCBI Taxonomy" id="251221"/>
    <lineage>
        <taxon>Bacteria</taxon>
        <taxon>Bacillati</taxon>
        <taxon>Cyanobacteriota</taxon>
        <taxon>Cyanophyceae</taxon>
        <taxon>Gloeobacterales</taxon>
        <taxon>Gloeobacteraceae</taxon>
        <taxon>Gloeobacter</taxon>
    </lineage>
</organism>
<keyword id="KW-0028">Amino-acid biosynthesis</keyword>
<keyword id="KW-0413">Isomerase</keyword>
<keyword id="KW-0486">Methionine biosynthesis</keyword>
<keyword id="KW-1185">Reference proteome</keyword>
<evidence type="ECO:0000255" key="1">
    <source>
        <dbReference type="HAMAP-Rule" id="MF_01678"/>
    </source>
</evidence>
<evidence type="ECO:0000305" key="2"/>
<reference key="1">
    <citation type="journal article" date="2003" name="DNA Res.">
        <title>Complete genome structure of Gloeobacter violaceus PCC 7421, a cyanobacterium that lacks thylakoids.</title>
        <authorList>
            <person name="Nakamura Y."/>
            <person name="Kaneko T."/>
            <person name="Sato S."/>
            <person name="Mimuro M."/>
            <person name="Miyashita H."/>
            <person name="Tsuchiya T."/>
            <person name="Sasamoto S."/>
            <person name="Watanabe A."/>
            <person name="Kawashima K."/>
            <person name="Kishida Y."/>
            <person name="Kiyokawa C."/>
            <person name="Kohara M."/>
            <person name="Matsumoto M."/>
            <person name="Matsuno A."/>
            <person name="Nakazaki N."/>
            <person name="Shimpo S."/>
            <person name="Takeuchi C."/>
            <person name="Yamada M."/>
            <person name="Tabata S."/>
        </authorList>
    </citation>
    <scope>NUCLEOTIDE SEQUENCE [LARGE SCALE GENOMIC DNA]</scope>
    <source>
        <strain>ATCC 29082 / PCC 7421</strain>
    </source>
</reference>
<name>MTNA_GLOVI</name>
<proteinExistence type="inferred from homology"/>